<accession>B7NUX5</accession>
<reference key="1">
    <citation type="journal article" date="2009" name="PLoS Genet.">
        <title>Organised genome dynamics in the Escherichia coli species results in highly diverse adaptive paths.</title>
        <authorList>
            <person name="Touchon M."/>
            <person name="Hoede C."/>
            <person name="Tenaillon O."/>
            <person name="Barbe V."/>
            <person name="Baeriswyl S."/>
            <person name="Bidet P."/>
            <person name="Bingen E."/>
            <person name="Bonacorsi S."/>
            <person name="Bouchier C."/>
            <person name="Bouvet O."/>
            <person name="Calteau A."/>
            <person name="Chiapello H."/>
            <person name="Clermont O."/>
            <person name="Cruveiller S."/>
            <person name="Danchin A."/>
            <person name="Diard M."/>
            <person name="Dossat C."/>
            <person name="Karoui M.E."/>
            <person name="Frapy E."/>
            <person name="Garry L."/>
            <person name="Ghigo J.M."/>
            <person name="Gilles A.M."/>
            <person name="Johnson J."/>
            <person name="Le Bouguenec C."/>
            <person name="Lescat M."/>
            <person name="Mangenot S."/>
            <person name="Martinez-Jehanne V."/>
            <person name="Matic I."/>
            <person name="Nassif X."/>
            <person name="Oztas S."/>
            <person name="Petit M.A."/>
            <person name="Pichon C."/>
            <person name="Rouy Z."/>
            <person name="Ruf C.S."/>
            <person name="Schneider D."/>
            <person name="Tourret J."/>
            <person name="Vacherie B."/>
            <person name="Vallenet D."/>
            <person name="Medigue C."/>
            <person name="Rocha E.P.C."/>
            <person name="Denamur E."/>
        </authorList>
    </citation>
    <scope>NUCLEOTIDE SEQUENCE [LARGE SCALE GENOMIC DNA]</scope>
    <source>
        <strain>IAI39 / ExPEC</strain>
    </source>
</reference>
<comment type="function">
    <text evidence="1">Plays a critical role in the incorporation of lipoproteins in the outer membrane after they are released by the LolA protein.</text>
</comment>
<comment type="subunit">
    <text evidence="1">Monomer.</text>
</comment>
<comment type="subcellular location">
    <subcellularLocation>
        <location evidence="1">Cell outer membrane</location>
        <topology evidence="1">Lipid-anchor</topology>
    </subcellularLocation>
</comment>
<comment type="similarity">
    <text evidence="1">Belongs to the LolB family.</text>
</comment>
<organism>
    <name type="scientific">Escherichia coli O7:K1 (strain IAI39 / ExPEC)</name>
    <dbReference type="NCBI Taxonomy" id="585057"/>
    <lineage>
        <taxon>Bacteria</taxon>
        <taxon>Pseudomonadati</taxon>
        <taxon>Pseudomonadota</taxon>
        <taxon>Gammaproteobacteria</taxon>
        <taxon>Enterobacterales</taxon>
        <taxon>Enterobacteriaceae</taxon>
        <taxon>Escherichia</taxon>
    </lineage>
</organism>
<feature type="signal peptide" evidence="1">
    <location>
        <begin position="1"/>
        <end position="21"/>
    </location>
</feature>
<feature type="chain" id="PRO_1000190858" description="Outer-membrane lipoprotein LolB">
    <location>
        <begin position="22"/>
        <end position="207"/>
    </location>
</feature>
<feature type="lipid moiety-binding region" description="N-palmitoyl cysteine" evidence="1">
    <location>
        <position position="22"/>
    </location>
</feature>
<feature type="lipid moiety-binding region" description="S-diacylglycerol cysteine" evidence="1">
    <location>
        <position position="22"/>
    </location>
</feature>
<keyword id="KW-0998">Cell outer membrane</keyword>
<keyword id="KW-0143">Chaperone</keyword>
<keyword id="KW-0449">Lipoprotein</keyword>
<keyword id="KW-0472">Membrane</keyword>
<keyword id="KW-0564">Palmitate</keyword>
<keyword id="KW-0653">Protein transport</keyword>
<keyword id="KW-0732">Signal</keyword>
<keyword id="KW-0813">Transport</keyword>
<dbReference type="EMBL" id="CU928164">
    <property type="protein sequence ID" value="CAR17677.1"/>
    <property type="molecule type" value="Genomic_DNA"/>
</dbReference>
<dbReference type="RefSeq" id="WP_001130702.1">
    <property type="nucleotide sequence ID" value="NC_011750.1"/>
</dbReference>
<dbReference type="RefSeq" id="YP_002407545.1">
    <property type="nucleotide sequence ID" value="NC_011750.1"/>
</dbReference>
<dbReference type="SMR" id="B7NUX5"/>
<dbReference type="STRING" id="585057.ECIAI39_1545"/>
<dbReference type="KEGG" id="ect:ECIAI39_1545"/>
<dbReference type="PATRIC" id="fig|585057.6.peg.1615"/>
<dbReference type="HOGENOM" id="CLU_092816_1_1_6"/>
<dbReference type="Proteomes" id="UP000000749">
    <property type="component" value="Chromosome"/>
</dbReference>
<dbReference type="GO" id="GO:0009279">
    <property type="term" value="C:cell outer membrane"/>
    <property type="evidence" value="ECO:0007669"/>
    <property type="project" value="UniProtKB-SubCell"/>
</dbReference>
<dbReference type="GO" id="GO:0044874">
    <property type="term" value="P:lipoprotein localization to outer membrane"/>
    <property type="evidence" value="ECO:0007669"/>
    <property type="project" value="UniProtKB-UniRule"/>
</dbReference>
<dbReference type="GO" id="GO:0015031">
    <property type="term" value="P:protein transport"/>
    <property type="evidence" value="ECO:0007669"/>
    <property type="project" value="UniProtKB-KW"/>
</dbReference>
<dbReference type="CDD" id="cd16326">
    <property type="entry name" value="LolB"/>
    <property type="match status" value="1"/>
</dbReference>
<dbReference type="FunFam" id="2.50.20.10:FF:000002">
    <property type="entry name" value="Outer-membrane lipoprotein LolB"/>
    <property type="match status" value="1"/>
</dbReference>
<dbReference type="Gene3D" id="2.50.20.10">
    <property type="entry name" value="Lipoprotein localisation LolA/LolB/LppX"/>
    <property type="match status" value="1"/>
</dbReference>
<dbReference type="HAMAP" id="MF_00233">
    <property type="entry name" value="LolB"/>
    <property type="match status" value="1"/>
</dbReference>
<dbReference type="InterPro" id="IPR029046">
    <property type="entry name" value="LolA/LolB/LppX"/>
</dbReference>
<dbReference type="InterPro" id="IPR004565">
    <property type="entry name" value="OM_lipoprot_LolB"/>
</dbReference>
<dbReference type="NCBIfam" id="TIGR00548">
    <property type="entry name" value="lolB"/>
    <property type="match status" value="1"/>
</dbReference>
<dbReference type="Pfam" id="PF03550">
    <property type="entry name" value="LolB"/>
    <property type="match status" value="1"/>
</dbReference>
<dbReference type="SUPFAM" id="SSF89392">
    <property type="entry name" value="Prokaryotic lipoproteins and lipoprotein localization factors"/>
    <property type="match status" value="1"/>
</dbReference>
<dbReference type="PROSITE" id="PS51257">
    <property type="entry name" value="PROKAR_LIPOPROTEIN"/>
    <property type="match status" value="1"/>
</dbReference>
<sequence>MPLPDFRLIRLLPLAALVLTACSVTTPKGPGKSPDSPQWRQHQQDVRNLNQYQTRGSFAYISDQQKVYARFFWQQTGQDRYRLLLTNPLGSTELELNAQPGNVQLVDNKGQRYTSDDAEEMIGKLTGMPIPLNSLRQWILGLPGDATDYKLDDQYRLSEITYSQNGKNWKVVYGGYDTKTQPAMPANMELTDGGQRIKLKMDNWIVK</sequence>
<protein>
    <recommendedName>
        <fullName evidence="1">Outer-membrane lipoprotein LolB</fullName>
    </recommendedName>
</protein>
<proteinExistence type="inferred from homology"/>
<name>LOLB_ECO7I</name>
<evidence type="ECO:0000255" key="1">
    <source>
        <dbReference type="HAMAP-Rule" id="MF_00233"/>
    </source>
</evidence>
<gene>
    <name evidence="1" type="primary">lolB</name>
    <name type="ordered locus">ECIAI39_1545</name>
</gene>